<comment type="function">
    <text evidence="1">Transcription factor that mediates regulation of both acid- and alkaline-expressed genes in response to ambient pH. At alkaline ambient pH, activates transcription of alkaline-expressed genes (including pacC itself) and represses transcription of acid-expressed genes (By similarity).</text>
</comment>
<comment type="subcellular location">
    <subcellularLocation>
        <location evidence="3">Nucleus</location>
    </subcellularLocation>
</comment>
<comment type="similarity">
    <text evidence="3">Belongs to the pacC/RIM101 family.</text>
</comment>
<protein>
    <recommendedName>
        <fullName>pH-response transcription factor pacC/RIM101</fullName>
    </recommendedName>
</protein>
<organism>
    <name type="scientific">Penicillium echinulatum</name>
    <name type="common">Mold</name>
    <dbReference type="NCBI Taxonomy" id="60174"/>
    <lineage>
        <taxon>Eukaryota</taxon>
        <taxon>Fungi</taxon>
        <taxon>Dikarya</taxon>
        <taxon>Ascomycota</taxon>
        <taxon>Pezizomycotina</taxon>
        <taxon>Eurotiomycetes</taxon>
        <taxon>Eurotiomycetidae</taxon>
        <taxon>Eurotiales</taxon>
        <taxon>Aspergillaceae</taxon>
        <taxon>Penicillium</taxon>
    </lineage>
</organism>
<accession>Q8J256</accession>
<gene>
    <name type="primary">PACC</name>
</gene>
<keyword id="KW-0010">Activator</keyword>
<keyword id="KW-0238">DNA-binding</keyword>
<keyword id="KW-0479">Metal-binding</keyword>
<keyword id="KW-0539">Nucleus</keyword>
<keyword id="KW-0677">Repeat</keyword>
<keyword id="KW-0678">Repressor</keyword>
<keyword id="KW-0804">Transcription</keyword>
<keyword id="KW-0805">Transcription regulation</keyword>
<keyword id="KW-0862">Zinc</keyword>
<keyword id="KW-0863">Zinc-finger</keyword>
<proteinExistence type="inferred from homology"/>
<evidence type="ECO:0000250" key="1"/>
<evidence type="ECO:0000255" key="2">
    <source>
        <dbReference type="PROSITE-ProRule" id="PRU00042"/>
    </source>
</evidence>
<evidence type="ECO:0000305" key="3"/>
<name>PACC_PENEC</name>
<sequence>EHVCERHVGRKSTHNLNLTCQWGSCNTTTVKRDHITSHLRVHVPLKPHKCDFCGKAFKRPQDLKKHVKNH</sequence>
<reference key="1">
    <citation type="submission" date="2002-08" db="EMBL/GenBank/DDBJ databases">
        <title>Penicillium echinulatum putative transcription factor PacC (pacC gene).</title>
        <authorList>
            <person name="Pocas-Fonseca M.J."/>
            <person name="Neves E.O."/>
            <person name="Rocha B.B."/>
            <person name="Azevedo M.O."/>
            <person name="Kubicek C.P."/>
        </authorList>
    </citation>
    <scope>NUCLEOTIDE SEQUENCE [GENOMIC DNA]</scope>
</reference>
<dbReference type="EMBL" id="AF536982">
    <property type="protein sequence ID" value="AAN06813.1"/>
    <property type="molecule type" value="Genomic_DNA"/>
</dbReference>
<dbReference type="SMR" id="Q8J256"/>
<dbReference type="GO" id="GO:0005634">
    <property type="term" value="C:nucleus"/>
    <property type="evidence" value="ECO:0007669"/>
    <property type="project" value="UniProtKB-SubCell"/>
</dbReference>
<dbReference type="GO" id="GO:0003677">
    <property type="term" value="F:DNA binding"/>
    <property type="evidence" value="ECO:0007669"/>
    <property type="project" value="UniProtKB-KW"/>
</dbReference>
<dbReference type="GO" id="GO:0008270">
    <property type="term" value="F:zinc ion binding"/>
    <property type="evidence" value="ECO:0007669"/>
    <property type="project" value="UniProtKB-KW"/>
</dbReference>
<dbReference type="GO" id="GO:0045944">
    <property type="term" value="P:positive regulation of transcription by RNA polymerase II"/>
    <property type="evidence" value="ECO:0007669"/>
    <property type="project" value="TreeGrafter"/>
</dbReference>
<dbReference type="FunFam" id="3.30.160.60:FF:000993">
    <property type="entry name" value="pH-response transcription factor pacC/RIM101"/>
    <property type="match status" value="1"/>
</dbReference>
<dbReference type="Gene3D" id="3.30.160.60">
    <property type="entry name" value="Classic Zinc Finger"/>
    <property type="match status" value="1"/>
</dbReference>
<dbReference type="InterPro" id="IPR050806">
    <property type="entry name" value="pacC/RIM101"/>
</dbReference>
<dbReference type="InterPro" id="IPR036236">
    <property type="entry name" value="Znf_C2H2_sf"/>
</dbReference>
<dbReference type="InterPro" id="IPR013087">
    <property type="entry name" value="Znf_C2H2_type"/>
</dbReference>
<dbReference type="PANTHER" id="PTHR47257">
    <property type="entry name" value="PH-RESPONSE TRANSCRIPTION FACTOR PACC/RIM101"/>
    <property type="match status" value="1"/>
</dbReference>
<dbReference type="PANTHER" id="PTHR47257:SF1">
    <property type="entry name" value="PH-RESPONSE TRANSCRIPTION FACTOR PACC_RIM101"/>
    <property type="match status" value="1"/>
</dbReference>
<dbReference type="Pfam" id="PF00096">
    <property type="entry name" value="zf-C2H2"/>
    <property type="match status" value="1"/>
</dbReference>
<dbReference type="SMART" id="SM00355">
    <property type="entry name" value="ZnF_C2H2"/>
    <property type="match status" value="2"/>
</dbReference>
<dbReference type="SUPFAM" id="SSF57667">
    <property type="entry name" value="beta-beta-alpha zinc fingers"/>
    <property type="match status" value="1"/>
</dbReference>
<dbReference type="PROSITE" id="PS00028">
    <property type="entry name" value="ZINC_FINGER_C2H2_1"/>
    <property type="match status" value="1"/>
</dbReference>
<dbReference type="PROSITE" id="PS50157">
    <property type="entry name" value="ZINC_FINGER_C2H2_2"/>
    <property type="match status" value="2"/>
</dbReference>
<feature type="chain" id="PRO_0000046841" description="pH-response transcription factor pacC/RIM101">
    <location>
        <begin position="1" status="less than"/>
        <end position="70" status="greater than"/>
    </location>
</feature>
<feature type="zinc finger region" description="C2H2-type 1" evidence="2">
    <location>
        <begin position="18"/>
        <end position="42"/>
    </location>
</feature>
<feature type="zinc finger region" description="C2H2-type 2" evidence="2">
    <location>
        <begin position="48"/>
        <end position="70"/>
    </location>
</feature>
<feature type="non-terminal residue">
    <location>
        <position position="1"/>
    </location>
</feature>
<feature type="non-terminal residue">
    <location>
        <position position="70"/>
    </location>
</feature>